<gene>
    <name evidence="1" type="primary">tmcAL</name>
    <name type="ordered locus">M6_Spy0295</name>
</gene>
<accession>Q5XDT3</accession>
<protein>
    <recommendedName>
        <fullName evidence="1">tRNA(Met) cytidine acetate ligase</fullName>
        <ecNumber evidence="1">6.3.4.-</ecNumber>
    </recommendedName>
</protein>
<dbReference type="EC" id="6.3.4.-" evidence="1"/>
<dbReference type="EMBL" id="CP000003">
    <property type="protein sequence ID" value="AAT86430.1"/>
    <property type="molecule type" value="Genomic_DNA"/>
</dbReference>
<dbReference type="RefSeq" id="WP_011184181.1">
    <property type="nucleotide sequence ID" value="NC_006086.1"/>
</dbReference>
<dbReference type="SMR" id="Q5XDT3"/>
<dbReference type="KEGG" id="spa:M6_Spy0295"/>
<dbReference type="HOGENOM" id="CLU_038915_0_2_9"/>
<dbReference type="Proteomes" id="UP000001167">
    <property type="component" value="Chromosome"/>
</dbReference>
<dbReference type="GO" id="GO:0005737">
    <property type="term" value="C:cytoplasm"/>
    <property type="evidence" value="ECO:0007669"/>
    <property type="project" value="UniProtKB-SubCell"/>
</dbReference>
<dbReference type="GO" id="GO:0005524">
    <property type="term" value="F:ATP binding"/>
    <property type="evidence" value="ECO:0007669"/>
    <property type="project" value="UniProtKB-KW"/>
</dbReference>
<dbReference type="GO" id="GO:0016879">
    <property type="term" value="F:ligase activity, forming carbon-nitrogen bonds"/>
    <property type="evidence" value="ECO:0007669"/>
    <property type="project" value="UniProtKB-UniRule"/>
</dbReference>
<dbReference type="GO" id="GO:0000049">
    <property type="term" value="F:tRNA binding"/>
    <property type="evidence" value="ECO:0007669"/>
    <property type="project" value="UniProtKB-KW"/>
</dbReference>
<dbReference type="GO" id="GO:0006400">
    <property type="term" value="P:tRNA modification"/>
    <property type="evidence" value="ECO:0007669"/>
    <property type="project" value="UniProtKB-UniRule"/>
</dbReference>
<dbReference type="Gene3D" id="3.40.50.620">
    <property type="entry name" value="HUPs"/>
    <property type="match status" value="1"/>
</dbReference>
<dbReference type="HAMAP" id="MF_01539">
    <property type="entry name" value="TmcAL"/>
    <property type="match status" value="1"/>
</dbReference>
<dbReference type="InterPro" id="IPR014729">
    <property type="entry name" value="Rossmann-like_a/b/a_fold"/>
</dbReference>
<dbReference type="InterPro" id="IPR008513">
    <property type="entry name" value="tRNA(Met)_cyd_acetate_ligase"/>
</dbReference>
<dbReference type="NCBIfam" id="NF010191">
    <property type="entry name" value="PRK13670.1"/>
    <property type="match status" value="1"/>
</dbReference>
<dbReference type="PANTHER" id="PTHR37825">
    <property type="entry name" value="TRNA(MET) CYTIDINE ACETATE LIGASE"/>
    <property type="match status" value="1"/>
</dbReference>
<dbReference type="PANTHER" id="PTHR37825:SF1">
    <property type="entry name" value="TRNA(MET) CYTIDINE ACETATE LIGASE"/>
    <property type="match status" value="1"/>
</dbReference>
<dbReference type="Pfam" id="PF05636">
    <property type="entry name" value="HIGH_NTase1"/>
    <property type="match status" value="1"/>
</dbReference>
<dbReference type="SUPFAM" id="SSF52374">
    <property type="entry name" value="Nucleotidylyl transferase"/>
    <property type="match status" value="1"/>
</dbReference>
<organism>
    <name type="scientific">Streptococcus pyogenes serotype M6 (strain ATCC BAA-946 / MGAS10394)</name>
    <dbReference type="NCBI Taxonomy" id="286636"/>
    <lineage>
        <taxon>Bacteria</taxon>
        <taxon>Bacillati</taxon>
        <taxon>Bacillota</taxon>
        <taxon>Bacilli</taxon>
        <taxon>Lactobacillales</taxon>
        <taxon>Streptococcaceae</taxon>
        <taxon>Streptococcus</taxon>
    </lineage>
</organism>
<keyword id="KW-0067">ATP-binding</keyword>
<keyword id="KW-0963">Cytoplasm</keyword>
<keyword id="KW-0436">Ligase</keyword>
<keyword id="KW-0547">Nucleotide-binding</keyword>
<keyword id="KW-0694">RNA-binding</keyword>
<keyword id="KW-0819">tRNA processing</keyword>
<keyword id="KW-0820">tRNA-binding</keyword>
<proteinExistence type="inferred from homology"/>
<reference key="1">
    <citation type="journal article" date="2004" name="J. Infect. Dis.">
        <title>Progress toward characterization of the group A Streptococcus metagenome: complete genome sequence of a macrolide-resistant serotype M6 strain.</title>
        <authorList>
            <person name="Banks D.J."/>
            <person name="Porcella S.F."/>
            <person name="Barbian K.D."/>
            <person name="Beres S.B."/>
            <person name="Philips L.E."/>
            <person name="Voyich J.M."/>
            <person name="DeLeo F.R."/>
            <person name="Martin J.M."/>
            <person name="Somerville G.A."/>
            <person name="Musser J.M."/>
        </authorList>
    </citation>
    <scope>NUCLEOTIDE SEQUENCE [LARGE SCALE GENOMIC DNA]</scope>
    <source>
        <strain>ATCC BAA-946 / MGAS10394</strain>
    </source>
</reference>
<evidence type="ECO:0000255" key="1">
    <source>
        <dbReference type="HAMAP-Rule" id="MF_01539"/>
    </source>
</evidence>
<name>TMCAL_STRP6</name>
<comment type="function">
    <text evidence="1">Catalyzes the formation of N(4)-acetylcytidine (ac(4)C) at the wobble position of elongator tRNA(Met), using acetate and ATP as substrates. First activates an acetate ion to form acetyladenylate (Ac-AMP) and then transfers the acetyl group to tRNA to form ac(4)C34.</text>
</comment>
<comment type="catalytic activity">
    <reaction evidence="1">
        <text>cytidine(34) in elongator tRNA(Met) + acetate + ATP = N(4)-acetylcytidine(34) in elongator tRNA(Met) + AMP + diphosphate</text>
        <dbReference type="Rhea" id="RHEA:58144"/>
        <dbReference type="Rhea" id="RHEA-COMP:10693"/>
        <dbReference type="Rhea" id="RHEA-COMP:10694"/>
        <dbReference type="ChEBI" id="CHEBI:30089"/>
        <dbReference type="ChEBI" id="CHEBI:30616"/>
        <dbReference type="ChEBI" id="CHEBI:33019"/>
        <dbReference type="ChEBI" id="CHEBI:74900"/>
        <dbReference type="ChEBI" id="CHEBI:82748"/>
        <dbReference type="ChEBI" id="CHEBI:456215"/>
    </reaction>
</comment>
<comment type="subcellular location">
    <subcellularLocation>
        <location evidence="1">Cytoplasm</location>
    </subcellularLocation>
</comment>
<comment type="similarity">
    <text evidence="1">Belongs to the TmcAL family.</text>
</comment>
<feature type="chain" id="PRO_0000147193" description="tRNA(Met) cytidine acetate ligase">
    <location>
        <begin position="1"/>
        <end position="368"/>
    </location>
</feature>
<feature type="binding site" evidence="1">
    <location>
        <begin position="7"/>
        <end position="20"/>
    </location>
    <ligand>
        <name>ATP</name>
        <dbReference type="ChEBI" id="CHEBI:30616"/>
    </ligand>
</feature>
<feature type="binding site" evidence="1">
    <location>
        <position position="96"/>
    </location>
    <ligand>
        <name>ATP</name>
        <dbReference type="ChEBI" id="CHEBI:30616"/>
    </ligand>
</feature>
<feature type="binding site" evidence="1">
    <location>
        <position position="152"/>
    </location>
    <ligand>
        <name>ATP</name>
        <dbReference type="ChEBI" id="CHEBI:30616"/>
    </ligand>
</feature>
<feature type="binding site" evidence="1">
    <location>
        <position position="175"/>
    </location>
    <ligand>
        <name>ATP</name>
        <dbReference type="ChEBI" id="CHEBI:30616"/>
    </ligand>
</feature>
<sequence length="368" mass="41646">MTVTGIIAEFNPFHNGHKYLLETAEGLKIIAMSGNFMQRGEPALIDKWIRSEMALKNGADIVVELPFFVSVQSADYFAQGAIDILCQLGIQQLAFGTEDVIDYQKLIKVYEKKSKQMTAYLSTLEDTLSYPQKTQKMWEIFAGVKFSGQTPNHILGLSYAKASAGKHIQLCPIKRQGAAYHSKDKNHLLASASAIRQHLNDWDFISHSVPNAGLLINNPHMSWDHYFSFLKYQILNHSDLTSIFQVNDELASRIKKAIKVSQNIDHLVDTVATKRYTKARVRRILTYILVNAKEPTLPKGIHILGFTSKGQAHLKKLKKSRPLITRIGAETWDEMTQKADSIYQLGHQDIPEQSFGRIPIIIKNERLN</sequence>